<comment type="function">
    <text evidence="1">Increases the formation of ribosomal termination complexes and stimulates activities of RF-1 and RF-2. It binds guanine nucleotides and has strong preference for UGA stop codons. It may interact directly with the ribosome. The stimulation of RF-1 and RF-2 is significantly reduced by GTP and GDP, but not by GMP.</text>
</comment>
<comment type="subcellular location">
    <subcellularLocation>
        <location evidence="1">Cytoplasm</location>
    </subcellularLocation>
</comment>
<comment type="similarity">
    <text evidence="1">Belongs to the TRAFAC class translation factor GTPase superfamily. Classic translation factor GTPase family. PrfC subfamily.</text>
</comment>
<keyword id="KW-0963">Cytoplasm</keyword>
<keyword id="KW-0342">GTP-binding</keyword>
<keyword id="KW-0547">Nucleotide-binding</keyword>
<keyword id="KW-0648">Protein biosynthesis</keyword>
<accession>B0BRI9</accession>
<gene>
    <name evidence="1" type="primary">prfC</name>
    <name type="ordered locus">APJL_0031</name>
</gene>
<feature type="chain" id="PRO_1000092471" description="Peptide chain release factor 3">
    <location>
        <begin position="1"/>
        <end position="526"/>
    </location>
</feature>
<feature type="domain" description="tr-type G">
    <location>
        <begin position="8"/>
        <end position="277"/>
    </location>
</feature>
<feature type="binding site" evidence="1">
    <location>
        <begin position="17"/>
        <end position="24"/>
    </location>
    <ligand>
        <name>GTP</name>
        <dbReference type="ChEBI" id="CHEBI:37565"/>
    </ligand>
</feature>
<feature type="binding site" evidence="1">
    <location>
        <begin position="85"/>
        <end position="89"/>
    </location>
    <ligand>
        <name>GTP</name>
        <dbReference type="ChEBI" id="CHEBI:37565"/>
    </ligand>
</feature>
<feature type="binding site" evidence="1">
    <location>
        <begin position="139"/>
        <end position="142"/>
    </location>
    <ligand>
        <name>GTP</name>
        <dbReference type="ChEBI" id="CHEBI:37565"/>
    </ligand>
</feature>
<organism>
    <name type="scientific">Actinobacillus pleuropneumoniae serotype 3 (strain JL03)</name>
    <dbReference type="NCBI Taxonomy" id="434271"/>
    <lineage>
        <taxon>Bacteria</taxon>
        <taxon>Pseudomonadati</taxon>
        <taxon>Pseudomonadota</taxon>
        <taxon>Gammaproteobacteria</taxon>
        <taxon>Pasteurellales</taxon>
        <taxon>Pasteurellaceae</taxon>
        <taxon>Actinobacillus</taxon>
    </lineage>
</organism>
<protein>
    <recommendedName>
        <fullName evidence="1">Peptide chain release factor 3</fullName>
        <shortName evidence="1">RF-3</shortName>
    </recommendedName>
</protein>
<dbReference type="EMBL" id="CP000687">
    <property type="protein sequence ID" value="ABY68637.1"/>
    <property type="molecule type" value="Genomic_DNA"/>
</dbReference>
<dbReference type="RefSeq" id="WP_005595638.1">
    <property type="nucleotide sequence ID" value="NC_010278.1"/>
</dbReference>
<dbReference type="SMR" id="B0BRI9"/>
<dbReference type="GeneID" id="48598171"/>
<dbReference type="KEGG" id="apj:APJL_0031"/>
<dbReference type="HOGENOM" id="CLU_002794_2_1_6"/>
<dbReference type="Proteomes" id="UP000008547">
    <property type="component" value="Chromosome"/>
</dbReference>
<dbReference type="GO" id="GO:0005829">
    <property type="term" value="C:cytosol"/>
    <property type="evidence" value="ECO:0007669"/>
    <property type="project" value="TreeGrafter"/>
</dbReference>
<dbReference type="GO" id="GO:0005525">
    <property type="term" value="F:GTP binding"/>
    <property type="evidence" value="ECO:0007669"/>
    <property type="project" value="UniProtKB-UniRule"/>
</dbReference>
<dbReference type="GO" id="GO:0003924">
    <property type="term" value="F:GTPase activity"/>
    <property type="evidence" value="ECO:0007669"/>
    <property type="project" value="InterPro"/>
</dbReference>
<dbReference type="GO" id="GO:0097216">
    <property type="term" value="F:guanosine tetraphosphate binding"/>
    <property type="evidence" value="ECO:0007669"/>
    <property type="project" value="UniProtKB-ARBA"/>
</dbReference>
<dbReference type="GO" id="GO:0016150">
    <property type="term" value="F:translation release factor activity, codon nonspecific"/>
    <property type="evidence" value="ECO:0007669"/>
    <property type="project" value="TreeGrafter"/>
</dbReference>
<dbReference type="GO" id="GO:0016149">
    <property type="term" value="F:translation release factor activity, codon specific"/>
    <property type="evidence" value="ECO:0007669"/>
    <property type="project" value="UniProtKB-UniRule"/>
</dbReference>
<dbReference type="GO" id="GO:0006449">
    <property type="term" value="P:regulation of translational termination"/>
    <property type="evidence" value="ECO:0007669"/>
    <property type="project" value="UniProtKB-UniRule"/>
</dbReference>
<dbReference type="CDD" id="cd04169">
    <property type="entry name" value="RF3"/>
    <property type="match status" value="1"/>
</dbReference>
<dbReference type="CDD" id="cd03689">
    <property type="entry name" value="RF3_II"/>
    <property type="match status" value="1"/>
</dbReference>
<dbReference type="CDD" id="cd16259">
    <property type="entry name" value="RF3_III"/>
    <property type="match status" value="1"/>
</dbReference>
<dbReference type="FunFam" id="2.40.30.10:FF:000040">
    <property type="entry name" value="Peptide chain release factor 3"/>
    <property type="match status" value="1"/>
</dbReference>
<dbReference type="FunFam" id="3.30.70.3280:FF:000001">
    <property type="entry name" value="Peptide chain release factor 3"/>
    <property type="match status" value="1"/>
</dbReference>
<dbReference type="FunFam" id="3.40.50.300:FF:000542">
    <property type="entry name" value="Peptide chain release factor 3"/>
    <property type="match status" value="1"/>
</dbReference>
<dbReference type="Gene3D" id="3.40.50.300">
    <property type="entry name" value="P-loop containing nucleotide triphosphate hydrolases"/>
    <property type="match status" value="2"/>
</dbReference>
<dbReference type="Gene3D" id="3.30.70.3280">
    <property type="entry name" value="Peptide chain release factor 3, domain III"/>
    <property type="match status" value="1"/>
</dbReference>
<dbReference type="HAMAP" id="MF_00072">
    <property type="entry name" value="Rel_fac_3"/>
    <property type="match status" value="1"/>
</dbReference>
<dbReference type="InterPro" id="IPR053905">
    <property type="entry name" value="EF-G-like_DII"/>
</dbReference>
<dbReference type="InterPro" id="IPR035647">
    <property type="entry name" value="EFG_III/V"/>
</dbReference>
<dbReference type="InterPro" id="IPR031157">
    <property type="entry name" value="G_TR_CS"/>
</dbReference>
<dbReference type="InterPro" id="IPR027417">
    <property type="entry name" value="P-loop_NTPase"/>
</dbReference>
<dbReference type="InterPro" id="IPR004548">
    <property type="entry name" value="PrfC"/>
</dbReference>
<dbReference type="InterPro" id="IPR032090">
    <property type="entry name" value="RF3_C"/>
</dbReference>
<dbReference type="InterPro" id="IPR038467">
    <property type="entry name" value="RF3_dom_3_sf"/>
</dbReference>
<dbReference type="InterPro" id="IPR041732">
    <property type="entry name" value="RF3_GTP-bd"/>
</dbReference>
<dbReference type="InterPro" id="IPR005225">
    <property type="entry name" value="Small_GTP-bd"/>
</dbReference>
<dbReference type="InterPro" id="IPR000795">
    <property type="entry name" value="T_Tr_GTP-bd_dom"/>
</dbReference>
<dbReference type="InterPro" id="IPR009000">
    <property type="entry name" value="Transl_B-barrel_sf"/>
</dbReference>
<dbReference type="NCBIfam" id="TIGR00503">
    <property type="entry name" value="prfC"/>
    <property type="match status" value="1"/>
</dbReference>
<dbReference type="NCBIfam" id="NF001964">
    <property type="entry name" value="PRK00741.1"/>
    <property type="match status" value="1"/>
</dbReference>
<dbReference type="NCBIfam" id="TIGR00231">
    <property type="entry name" value="small_GTP"/>
    <property type="match status" value="1"/>
</dbReference>
<dbReference type="PANTHER" id="PTHR43556">
    <property type="entry name" value="PEPTIDE CHAIN RELEASE FACTOR RF3"/>
    <property type="match status" value="1"/>
</dbReference>
<dbReference type="PANTHER" id="PTHR43556:SF2">
    <property type="entry name" value="PEPTIDE CHAIN RELEASE FACTOR RF3"/>
    <property type="match status" value="1"/>
</dbReference>
<dbReference type="Pfam" id="PF22042">
    <property type="entry name" value="EF-G_D2"/>
    <property type="match status" value="1"/>
</dbReference>
<dbReference type="Pfam" id="PF00009">
    <property type="entry name" value="GTP_EFTU"/>
    <property type="match status" value="1"/>
</dbReference>
<dbReference type="Pfam" id="PF16658">
    <property type="entry name" value="RF3_C"/>
    <property type="match status" value="1"/>
</dbReference>
<dbReference type="PRINTS" id="PR00315">
    <property type="entry name" value="ELONGATNFCT"/>
</dbReference>
<dbReference type="SUPFAM" id="SSF54980">
    <property type="entry name" value="EF-G C-terminal domain-like"/>
    <property type="match status" value="1"/>
</dbReference>
<dbReference type="SUPFAM" id="SSF52540">
    <property type="entry name" value="P-loop containing nucleoside triphosphate hydrolases"/>
    <property type="match status" value="1"/>
</dbReference>
<dbReference type="SUPFAM" id="SSF50447">
    <property type="entry name" value="Translation proteins"/>
    <property type="match status" value="1"/>
</dbReference>
<dbReference type="PROSITE" id="PS00301">
    <property type="entry name" value="G_TR_1"/>
    <property type="match status" value="1"/>
</dbReference>
<dbReference type="PROSITE" id="PS51722">
    <property type="entry name" value="G_TR_2"/>
    <property type="match status" value="1"/>
</dbReference>
<reference key="1">
    <citation type="journal article" date="2008" name="PLoS ONE">
        <title>Genome biology of Actinobacillus pleuropneumoniae JL03, an isolate of serotype 3 prevalent in China.</title>
        <authorList>
            <person name="Xu Z."/>
            <person name="Zhou Y."/>
            <person name="Li L."/>
            <person name="Zhou R."/>
            <person name="Xiao S."/>
            <person name="Wan Y."/>
            <person name="Zhang S."/>
            <person name="Wang K."/>
            <person name="Li W."/>
            <person name="Li L."/>
            <person name="Jin H."/>
            <person name="Kang M."/>
            <person name="Dalai B."/>
            <person name="Li T."/>
            <person name="Liu L."/>
            <person name="Cheng Y."/>
            <person name="Zhang L."/>
            <person name="Xu T."/>
            <person name="Zheng H."/>
            <person name="Pu S."/>
            <person name="Wang B."/>
            <person name="Gu W."/>
            <person name="Zhang X.L."/>
            <person name="Zhu G.-F."/>
            <person name="Wang S."/>
            <person name="Zhao G.-P."/>
            <person name="Chen H."/>
        </authorList>
    </citation>
    <scope>NUCLEOTIDE SEQUENCE [LARGE SCALE GENOMIC DNA]</scope>
    <source>
        <strain>JL03</strain>
    </source>
</reference>
<proteinExistence type="inferred from homology"/>
<name>RF3_ACTPJ</name>
<sequence>MSYPQEVNKRRTFAIISHPDAGKTTITEKVLLYGNAIQTAGSVKGKGSSAHAKSDWMEMEKQRGISITTSVMQFPYNNCLVNLLDTPGHEDFSEDTYRTLTAVDSCLMVIDSAKGVEERTIKLMEVTRLRDTPILTFMNKLDRDIRDPMELLDEVESVLKIRCAPITWPIGCGKLFKGVYHIAKDETYLYQSGQGSTIQEVRIVKGLSSPELDAAVGDDLANQLREELELVQGASNEFDHEAFINGELTPVFFGTALGNFGVDHFLDGLTEWAPKPQARQTDVRTVESSEEKFSGFVFKIQANMDPKHRDRVAFMRVVSGKYEKGMKLKHVRIGKDVVISDALTFMAGDRAHAEEAYAGDIIGLHNHGTIQIGDTFTQGEVMKFTGIPNFAPELFRRIRLKDPLKQKQLLKGLVQLSEEGAVQVFRPLMNNDLIVGAVGVLQFDVVVSRLKTEYNVEAIYEAVNVATARWVECGDAKKFEEFKRKNEQNLALDGGDNLTYIAPTMVNLNLAQERYPDINFFKTREH</sequence>
<evidence type="ECO:0000255" key="1">
    <source>
        <dbReference type="HAMAP-Rule" id="MF_00072"/>
    </source>
</evidence>